<sequence>MDYRIRTSRDEDAALLPAIERSAGESFRLLPELAWIADAGVAGVDFHRRLIERGSHWLAEDADGQPVGFLAAERCADELHIAELSIAQAHQQQGLGRRLLERAVTYAHASHCRALTLTTFCDVPWNAPFYARLGFQRLTWQEAGERLRAILGHEQEIGFAADSRCAMRLVL</sequence>
<protein>
    <recommendedName>
        <fullName evidence="4">Acetyltransferase PA2271</fullName>
        <ecNumber>2.3.1.-</ecNumber>
    </recommendedName>
    <alternativeName>
        <fullName evidence="4">GCN5-related N-acetyltransferase</fullName>
        <shortName evidence="4">GNAT</shortName>
    </alternativeName>
</protein>
<organism>
    <name type="scientific">Pseudomonas aeruginosa (strain ATCC 15692 / DSM 22644 / CIP 104116 / JCM 14847 / LMG 12228 / 1C / PRS 101 / PAO1)</name>
    <dbReference type="NCBI Taxonomy" id="208964"/>
    <lineage>
        <taxon>Bacteria</taxon>
        <taxon>Pseudomonadati</taxon>
        <taxon>Pseudomonadota</taxon>
        <taxon>Gammaproteobacteria</taxon>
        <taxon>Pseudomonadales</taxon>
        <taxon>Pseudomonadaceae</taxon>
        <taxon>Pseudomonas</taxon>
    </lineage>
</organism>
<evidence type="ECO:0000250" key="1">
    <source>
        <dbReference type="UniProtKB" id="Q9I0Q8"/>
    </source>
</evidence>
<evidence type="ECO:0000255" key="2">
    <source>
        <dbReference type="PROSITE-ProRule" id="PRU00532"/>
    </source>
</evidence>
<evidence type="ECO:0000269" key="3">
    <source>
    </source>
</evidence>
<evidence type="ECO:0000303" key="4">
    <source>
    </source>
</evidence>
<dbReference type="EC" id="2.3.1.-"/>
<dbReference type="EMBL" id="AE004091">
    <property type="protein sequence ID" value="AAG05659.1"/>
    <property type="molecule type" value="Genomic_DNA"/>
</dbReference>
<dbReference type="PIR" id="H83360">
    <property type="entry name" value="H83360"/>
</dbReference>
<dbReference type="RefSeq" id="NP_250961.1">
    <property type="nucleotide sequence ID" value="NC_002516.2"/>
</dbReference>
<dbReference type="RefSeq" id="WP_003089295.1">
    <property type="nucleotide sequence ID" value="NZ_QZGE01000014.1"/>
</dbReference>
<dbReference type="SMR" id="Q9I1K2"/>
<dbReference type="STRING" id="208964.PA2271"/>
<dbReference type="PaxDb" id="208964-PA2271"/>
<dbReference type="DNASU" id="879779"/>
<dbReference type="GeneID" id="879779"/>
<dbReference type="KEGG" id="pae:PA2271"/>
<dbReference type="PATRIC" id="fig|208964.12.peg.2373"/>
<dbReference type="PseudoCAP" id="PA2271"/>
<dbReference type="HOGENOM" id="CLU_096760_0_0_6"/>
<dbReference type="InParanoid" id="Q9I1K2"/>
<dbReference type="OrthoDB" id="572496at2"/>
<dbReference type="PhylomeDB" id="Q9I1K2"/>
<dbReference type="BioCyc" id="PAER208964:G1FZ6-2310-MONOMER"/>
<dbReference type="Proteomes" id="UP000002438">
    <property type="component" value="Chromosome"/>
</dbReference>
<dbReference type="GO" id="GO:0016747">
    <property type="term" value="F:acyltransferase activity, transferring groups other than amino-acyl groups"/>
    <property type="evidence" value="ECO:0000314"/>
    <property type="project" value="UniProtKB"/>
</dbReference>
<dbReference type="CDD" id="cd04301">
    <property type="entry name" value="NAT_SF"/>
    <property type="match status" value="1"/>
</dbReference>
<dbReference type="Gene3D" id="3.40.630.30">
    <property type="match status" value="1"/>
</dbReference>
<dbReference type="InterPro" id="IPR016181">
    <property type="entry name" value="Acyl_CoA_acyltransferase"/>
</dbReference>
<dbReference type="InterPro" id="IPR000182">
    <property type="entry name" value="GNAT_dom"/>
</dbReference>
<dbReference type="PANTHER" id="PTHR43800">
    <property type="entry name" value="PEPTIDYL-LYSINE N-ACETYLTRANSFERASE YJAB"/>
    <property type="match status" value="1"/>
</dbReference>
<dbReference type="PANTHER" id="PTHR43800:SF1">
    <property type="entry name" value="PEPTIDYL-LYSINE N-ACETYLTRANSFERASE YJAB"/>
    <property type="match status" value="1"/>
</dbReference>
<dbReference type="Pfam" id="PF00583">
    <property type="entry name" value="Acetyltransf_1"/>
    <property type="match status" value="1"/>
</dbReference>
<dbReference type="SUPFAM" id="SSF55729">
    <property type="entry name" value="Acyl-CoA N-acyltransferases (Nat)"/>
    <property type="match status" value="1"/>
</dbReference>
<dbReference type="PROSITE" id="PS51186">
    <property type="entry name" value="GNAT"/>
    <property type="match status" value="1"/>
</dbReference>
<comment type="function">
    <text evidence="3">Catalyzes the transfer of an acetyl group from acetyl coenzyme A (AcCoA) to an acceptor substrate and releases both CoA and the acetylated product. It can use a variety of substrates including spermidine, spermine and N(8)-acetylspermidine, 7-aminocephalosporanic acid, colistin and thiamine.</text>
</comment>
<keyword id="KW-0012">Acyltransferase</keyword>
<keyword id="KW-1185">Reference proteome</keyword>
<keyword id="KW-0808">Transferase</keyword>
<reference key="1">
    <citation type="journal article" date="2000" name="Nature">
        <title>Complete genome sequence of Pseudomonas aeruginosa PAO1, an opportunistic pathogen.</title>
        <authorList>
            <person name="Stover C.K."/>
            <person name="Pham X.-Q.T."/>
            <person name="Erwin A.L."/>
            <person name="Mizoguchi S.D."/>
            <person name="Warrener P."/>
            <person name="Hickey M.J."/>
            <person name="Brinkman F.S.L."/>
            <person name="Hufnagle W.O."/>
            <person name="Kowalik D.J."/>
            <person name="Lagrou M."/>
            <person name="Garber R.L."/>
            <person name="Goltry L."/>
            <person name="Tolentino E."/>
            <person name="Westbrock-Wadman S."/>
            <person name="Yuan Y."/>
            <person name="Brody L.L."/>
            <person name="Coulter S.N."/>
            <person name="Folger K.R."/>
            <person name="Kas A."/>
            <person name="Larbig K."/>
            <person name="Lim R.M."/>
            <person name="Smith K.A."/>
            <person name="Spencer D.H."/>
            <person name="Wong G.K.-S."/>
            <person name="Wu Z."/>
            <person name="Paulsen I.T."/>
            <person name="Reizer J."/>
            <person name="Saier M.H. Jr."/>
            <person name="Hancock R.E.W."/>
            <person name="Lory S."/>
            <person name="Olson M.V."/>
        </authorList>
    </citation>
    <scope>NUCLEOTIDE SEQUENCE [LARGE SCALE GENOMIC DNA]</scope>
    <source>
        <strain>ATCC 15692 / DSM 22644 / CIP 104116 / JCM 14847 / LMG 12228 / 1C / PRS 101 / PAO1</strain>
    </source>
</reference>
<reference key="2">
    <citation type="journal article" date="2013" name="Protein Sci.">
        <title>Broad-substrate screen as a tool to identify substrates for bacterial Gcn5-related N-acetyltransferases with unknown substrate specificity.</title>
        <authorList>
            <person name="Kuhn M.L."/>
            <person name="Majorek K.A."/>
            <person name="Minor W."/>
            <person name="Anderson W.F."/>
        </authorList>
    </citation>
    <scope>FUNCTION</scope>
    <scope>SUBSTRATE SPECIFICITY</scope>
    <source>
        <strain>ATCC 15692 / DSM 22644 / CIP 104116 / JCM 14847 / LMG 12228 / 1C / PRS 101 / PAO1</strain>
    </source>
</reference>
<name>ATSE1_PSEAE</name>
<gene>
    <name type="ordered locus">PA2271</name>
</gene>
<feature type="chain" id="PRO_0000433347" description="Acetyltransferase PA2271">
    <location>
        <begin position="1"/>
        <end position="171"/>
    </location>
</feature>
<feature type="domain" description="N-acetyltransferase" evidence="2">
    <location>
        <begin position="3"/>
        <end position="162"/>
    </location>
</feature>
<feature type="binding site" evidence="1">
    <location>
        <begin position="84"/>
        <end position="86"/>
    </location>
    <ligand>
        <name>CoA</name>
        <dbReference type="ChEBI" id="CHEBI:57287"/>
    </ligand>
</feature>
<feature type="binding site" evidence="1">
    <location>
        <begin position="128"/>
        <end position="130"/>
    </location>
    <ligand>
        <name>CoA</name>
        <dbReference type="ChEBI" id="CHEBI:57287"/>
    </ligand>
</feature>
<accession>Q9I1K2</accession>
<proteinExistence type="predicted"/>